<reference key="1">
    <citation type="journal article" date="2008" name="PLoS Genet.">
        <title>Genomic islands in the pathogenic filamentous fungus Aspergillus fumigatus.</title>
        <authorList>
            <person name="Fedorova N.D."/>
            <person name="Khaldi N."/>
            <person name="Joardar V.S."/>
            <person name="Maiti R."/>
            <person name="Amedeo P."/>
            <person name="Anderson M.J."/>
            <person name="Crabtree J."/>
            <person name="Silva J.C."/>
            <person name="Badger J.H."/>
            <person name="Albarraq A."/>
            <person name="Angiuoli S."/>
            <person name="Bussey H."/>
            <person name="Bowyer P."/>
            <person name="Cotty P.J."/>
            <person name="Dyer P.S."/>
            <person name="Egan A."/>
            <person name="Galens K."/>
            <person name="Fraser-Liggett C.M."/>
            <person name="Haas B.J."/>
            <person name="Inman J.M."/>
            <person name="Kent R."/>
            <person name="Lemieux S."/>
            <person name="Malavazi I."/>
            <person name="Orvis J."/>
            <person name="Roemer T."/>
            <person name="Ronning C.M."/>
            <person name="Sundaram J.P."/>
            <person name="Sutton G."/>
            <person name="Turner G."/>
            <person name="Venter J.C."/>
            <person name="White O.R."/>
            <person name="Whitty B.R."/>
            <person name="Youngman P."/>
            <person name="Wolfe K.H."/>
            <person name="Goldman G.H."/>
            <person name="Wortman J.R."/>
            <person name="Jiang B."/>
            <person name="Denning D.W."/>
            <person name="Nierman W.C."/>
        </authorList>
    </citation>
    <scope>NUCLEOTIDE SEQUENCE [LARGE SCALE GENOMIC DNA]</scope>
    <source>
        <strain>CBS 144.89 / FGSC A1163 / CEA10</strain>
    </source>
</reference>
<evidence type="ECO:0000250" key="1"/>
<evidence type="ECO:0000250" key="2">
    <source>
        <dbReference type="UniProtKB" id="P48449"/>
    </source>
</evidence>
<evidence type="ECO:0000305" key="3"/>
<feature type="chain" id="PRO_0000415496" description="Protostadienol synthase A">
    <location>
        <begin position="1"/>
        <end position="735"/>
    </location>
</feature>
<feature type="repeat" description="PFTB 1">
    <location>
        <begin position="132"/>
        <end position="173"/>
    </location>
</feature>
<feature type="repeat" description="PFTB 2">
    <location>
        <begin position="490"/>
        <end position="531"/>
    </location>
</feature>
<feature type="repeat" description="PFTB 3">
    <location>
        <begin position="567"/>
        <end position="607"/>
    </location>
</feature>
<feature type="repeat" description="PFTB 4">
    <location>
        <begin position="616"/>
        <end position="663"/>
    </location>
</feature>
<feature type="active site" description="Proton donor" evidence="2">
    <location>
        <position position="463"/>
    </location>
</feature>
<name>PDSA_ASPFC</name>
<organism>
    <name type="scientific">Aspergillus fumigatus (strain CBS 144.89 / FGSC A1163 / CEA10)</name>
    <name type="common">Neosartorya fumigata</name>
    <dbReference type="NCBI Taxonomy" id="451804"/>
    <lineage>
        <taxon>Eukaryota</taxon>
        <taxon>Fungi</taxon>
        <taxon>Dikarya</taxon>
        <taxon>Ascomycota</taxon>
        <taxon>Pezizomycotina</taxon>
        <taxon>Eurotiomycetes</taxon>
        <taxon>Eurotiomycetidae</taxon>
        <taxon>Eurotiales</taxon>
        <taxon>Aspergillaceae</taxon>
        <taxon>Aspergillus</taxon>
        <taxon>Aspergillus subgen. Fumigati</taxon>
    </lineage>
</organism>
<protein>
    <recommendedName>
        <fullName>Protostadienol synthase A</fullName>
        <ecNumber>5.4.99.32</ecNumber>
    </recommendedName>
</protein>
<gene>
    <name type="primary">pdsA</name>
    <name type="ORF">AFUB_072030</name>
</gene>
<comment type="function">
    <text evidence="1">Protostadienol synthase which cyclizes (3S)-oxidosqualene to (17Z)-protosta-17(20),24-dien-3-beta-ol (protostadienol), the biosynthetic precursor of helvolic acid, a secondary metabolite which promotes virulence.</text>
</comment>
<comment type="catalytic activity">
    <reaction>
        <text>(S)-2,3-epoxysqualene = (17Z)-protosta-17(20),24-dien-3beta-ol</text>
        <dbReference type="Rhea" id="RHEA:30987"/>
        <dbReference type="ChEBI" id="CHEBI:15441"/>
        <dbReference type="ChEBI" id="CHEBI:62457"/>
        <dbReference type="EC" id="5.4.99.32"/>
    </reaction>
</comment>
<comment type="similarity">
    <text evidence="3">Belongs to the terpene cyclase/mutase family.</text>
</comment>
<accession>B0Y5B4</accession>
<dbReference type="EC" id="5.4.99.32"/>
<dbReference type="EMBL" id="DS499598">
    <property type="protein sequence ID" value="EDP50863.1"/>
    <property type="molecule type" value="Genomic_DNA"/>
</dbReference>
<dbReference type="SMR" id="B0Y5B4"/>
<dbReference type="EnsemblFungi" id="EDP50863">
    <property type="protein sequence ID" value="EDP50863"/>
    <property type="gene ID" value="AFUB_072030"/>
</dbReference>
<dbReference type="VEuPathDB" id="FungiDB:AFUB_072030"/>
<dbReference type="HOGENOM" id="CLU_009074_2_1_1"/>
<dbReference type="OrthoDB" id="3757at5052"/>
<dbReference type="PhylomeDB" id="B0Y5B4"/>
<dbReference type="Proteomes" id="UP000001699">
    <property type="component" value="Unassembled WGS sequence"/>
</dbReference>
<dbReference type="GO" id="GO:0005811">
    <property type="term" value="C:lipid droplet"/>
    <property type="evidence" value="ECO:0007669"/>
    <property type="project" value="InterPro"/>
</dbReference>
<dbReference type="GO" id="GO:0000250">
    <property type="term" value="F:lanosterol synthase activity"/>
    <property type="evidence" value="ECO:0007669"/>
    <property type="project" value="TreeGrafter"/>
</dbReference>
<dbReference type="GO" id="GO:0006696">
    <property type="term" value="P:ergosterol biosynthetic process"/>
    <property type="evidence" value="ECO:0007669"/>
    <property type="project" value="TreeGrafter"/>
</dbReference>
<dbReference type="GO" id="GO:0016104">
    <property type="term" value="P:triterpenoid biosynthetic process"/>
    <property type="evidence" value="ECO:0007669"/>
    <property type="project" value="InterPro"/>
</dbReference>
<dbReference type="CDD" id="cd02892">
    <property type="entry name" value="SQCY_1"/>
    <property type="match status" value="1"/>
</dbReference>
<dbReference type="FunFam" id="1.50.10.20:FF:000002">
    <property type="entry name" value="Terpene cyclase/mutase family member"/>
    <property type="match status" value="1"/>
</dbReference>
<dbReference type="FunFam" id="1.50.10.20:FF:000003">
    <property type="entry name" value="Terpene cyclase/mutase family member"/>
    <property type="match status" value="1"/>
</dbReference>
<dbReference type="Gene3D" id="1.50.10.20">
    <property type="match status" value="2"/>
</dbReference>
<dbReference type="Gene3D" id="6.20.120.20">
    <property type="match status" value="1"/>
</dbReference>
<dbReference type="InterPro" id="IPR032696">
    <property type="entry name" value="SQ_cyclase_C"/>
</dbReference>
<dbReference type="InterPro" id="IPR032697">
    <property type="entry name" value="SQ_cyclase_N"/>
</dbReference>
<dbReference type="InterPro" id="IPR018333">
    <property type="entry name" value="Squalene_cyclase"/>
</dbReference>
<dbReference type="InterPro" id="IPR008930">
    <property type="entry name" value="Terpenoid_cyclase/PrenylTrfase"/>
</dbReference>
<dbReference type="NCBIfam" id="TIGR01787">
    <property type="entry name" value="squalene_cyclas"/>
    <property type="match status" value="1"/>
</dbReference>
<dbReference type="PANTHER" id="PTHR11764:SF20">
    <property type="entry name" value="LANOSTEROL SYNTHASE"/>
    <property type="match status" value="1"/>
</dbReference>
<dbReference type="PANTHER" id="PTHR11764">
    <property type="entry name" value="TERPENE CYCLASE/MUTASE FAMILY MEMBER"/>
    <property type="match status" value="1"/>
</dbReference>
<dbReference type="Pfam" id="PF13243">
    <property type="entry name" value="SQHop_cyclase_C"/>
    <property type="match status" value="1"/>
</dbReference>
<dbReference type="Pfam" id="PF13249">
    <property type="entry name" value="SQHop_cyclase_N"/>
    <property type="match status" value="1"/>
</dbReference>
<dbReference type="SFLD" id="SFLDG01016">
    <property type="entry name" value="Prenyltransferase_Like_2"/>
    <property type="match status" value="1"/>
</dbReference>
<dbReference type="SUPFAM" id="SSF48239">
    <property type="entry name" value="Terpenoid cyclases/Protein prenyltransferases"/>
    <property type="match status" value="2"/>
</dbReference>
<proteinExistence type="inferred from homology"/>
<sequence>MATDSSMPGTVIGKAEFSDTKAASEFGTDLSRWRLNVDNGRHMWEYLESEDEARKRPQSFLEKYWLGLPYELPARPRATCALEAVENGWEFFKRLQTADGHWGCNDDGPLFVTSGMVIARYIVGIPIDSHMKQEMCRYLLNVVNEDGGWGLFIQSPSTVFGTVMNYCMLRILGLGPEHPAMAKARNTLHRLGSARATPTWGKFWLCVLGVYEWEGMVPLPPEPLLVPASLPFNPGKWWVHTRNVYISMSYLYGHRFSMPPNKLVQALRDELYDIPYQQINWPAQRTNVSAADRLTDPTWIQRSFTSALTMYETFKIPFLRRRALNEALFQIETETRNTHYLCIAPVSFASNMLALYHAHGRDSHWIRGMRDRFIDPMWLCREGLAASGTNGTSLWDTALTVQATIDAGLAARPENQAILRKALEFIDNSQIREDPLGVHHVYRQPTRGAWPFSTRDQSYAVSDTTAEAVKVIVLLQRIEGFPSRISDERLQQAIDLILGMENAGGGFSAYEPVRGPKFLELLNITELYENVMTDNLYPECTSSVIMCLTTFAREYPTYRPRDIQACLSRSIDYLLRSQYPNGGWFASWGVCFTYATMFALQGLACMGWNESNCAACQRACSFLLQHQNPDGGWGESLDTVRFKQYLPHPDGSQVTNTAYAVIGLLAARCGNHEAIRRGVAYLVKEQQDTGEWLPGPLEGVFAPPGGMRYPNYKFHFTLMALGRYVAIHGNECLAI</sequence>
<keyword id="KW-0413">Isomerase</keyword>
<keyword id="KW-0444">Lipid biosynthesis</keyword>
<keyword id="KW-0443">Lipid metabolism</keyword>
<keyword id="KW-0677">Repeat</keyword>
<keyword id="KW-0752">Steroid biosynthesis</keyword>
<keyword id="KW-0843">Virulence</keyword>